<proteinExistence type="inferred from homology"/>
<accession>Q8EJ69</accession>
<gene>
    <name evidence="1" type="primary">hfq</name>
    <name type="ordered locus">SO_0603</name>
</gene>
<feature type="chain" id="PRO_0000095662" description="RNA-binding protein Hfq">
    <location>
        <begin position="1"/>
        <end position="90"/>
    </location>
</feature>
<feature type="domain" description="Sm" evidence="2">
    <location>
        <begin position="9"/>
        <end position="68"/>
    </location>
</feature>
<protein>
    <recommendedName>
        <fullName evidence="1">RNA-binding protein Hfq</fullName>
    </recommendedName>
</protein>
<comment type="function">
    <text evidence="1">RNA chaperone that binds small regulatory RNA (sRNAs) and mRNAs to facilitate mRNA translational regulation in response to envelope stress, environmental stress and changes in metabolite concentrations. Also binds with high specificity to tRNAs.</text>
</comment>
<comment type="subunit">
    <text evidence="1">Homohexamer.</text>
</comment>
<comment type="similarity">
    <text evidence="1">Belongs to the Hfq family.</text>
</comment>
<reference key="1">
    <citation type="journal article" date="2002" name="Nat. Biotechnol.">
        <title>Genome sequence of the dissimilatory metal ion-reducing bacterium Shewanella oneidensis.</title>
        <authorList>
            <person name="Heidelberg J.F."/>
            <person name="Paulsen I.T."/>
            <person name="Nelson K.E."/>
            <person name="Gaidos E.J."/>
            <person name="Nelson W.C."/>
            <person name="Read T.D."/>
            <person name="Eisen J.A."/>
            <person name="Seshadri R."/>
            <person name="Ward N.L."/>
            <person name="Methe B.A."/>
            <person name="Clayton R.A."/>
            <person name="Meyer T."/>
            <person name="Tsapin A."/>
            <person name="Scott J."/>
            <person name="Beanan M.J."/>
            <person name="Brinkac L.M."/>
            <person name="Daugherty S.C."/>
            <person name="DeBoy R.T."/>
            <person name="Dodson R.J."/>
            <person name="Durkin A.S."/>
            <person name="Haft D.H."/>
            <person name="Kolonay J.F."/>
            <person name="Madupu R."/>
            <person name="Peterson J.D."/>
            <person name="Umayam L.A."/>
            <person name="White O."/>
            <person name="Wolf A.M."/>
            <person name="Vamathevan J.J."/>
            <person name="Weidman J.F."/>
            <person name="Impraim M."/>
            <person name="Lee K."/>
            <person name="Berry K.J."/>
            <person name="Lee C."/>
            <person name="Mueller J."/>
            <person name="Khouri H.M."/>
            <person name="Gill J."/>
            <person name="Utterback T.R."/>
            <person name="McDonald L.A."/>
            <person name="Feldblyum T.V."/>
            <person name="Smith H.O."/>
            <person name="Venter J.C."/>
            <person name="Nealson K.H."/>
            <person name="Fraser C.M."/>
        </authorList>
    </citation>
    <scope>NUCLEOTIDE SEQUENCE [LARGE SCALE GENOMIC DNA]</scope>
    <source>
        <strain>ATCC 700550 / JCM 31522 / CIP 106686 / LMG 19005 / NCIMB 14063 / MR-1</strain>
    </source>
</reference>
<sequence>MAKGQSLQDPFLNALRRERVPVSIYLVNGIKLQGQVESFDQFVILLKNTVSQMVYKHAISTVVPARPFNVAGHQNAQGGYGAQDDMPSGE</sequence>
<name>HFQ_SHEON</name>
<dbReference type="EMBL" id="AE014299">
    <property type="protein sequence ID" value="AAN53681.1"/>
    <property type="molecule type" value="Genomic_DNA"/>
</dbReference>
<dbReference type="RefSeq" id="NP_716236.1">
    <property type="nucleotide sequence ID" value="NC_004347.2"/>
</dbReference>
<dbReference type="RefSeq" id="WP_011070934.1">
    <property type="nucleotide sequence ID" value="NZ_CP053946.1"/>
</dbReference>
<dbReference type="SMR" id="Q8EJ69"/>
<dbReference type="STRING" id="211586.SO_0603"/>
<dbReference type="PaxDb" id="211586-SO_0603"/>
<dbReference type="GeneID" id="94726586"/>
<dbReference type="KEGG" id="son:SO_0603"/>
<dbReference type="PATRIC" id="fig|211586.12.peg.582"/>
<dbReference type="eggNOG" id="COG1923">
    <property type="taxonomic scope" value="Bacteria"/>
</dbReference>
<dbReference type="HOGENOM" id="CLU_113688_2_2_6"/>
<dbReference type="OrthoDB" id="9799751at2"/>
<dbReference type="PhylomeDB" id="Q8EJ69"/>
<dbReference type="BioCyc" id="SONE211586:G1GMP-573-MONOMER"/>
<dbReference type="Proteomes" id="UP000008186">
    <property type="component" value="Chromosome"/>
</dbReference>
<dbReference type="GO" id="GO:0005829">
    <property type="term" value="C:cytosol"/>
    <property type="evidence" value="ECO:0000318"/>
    <property type="project" value="GO_Central"/>
</dbReference>
<dbReference type="GO" id="GO:0003723">
    <property type="term" value="F:RNA binding"/>
    <property type="evidence" value="ECO:0000318"/>
    <property type="project" value="GO_Central"/>
</dbReference>
<dbReference type="GO" id="GO:0006355">
    <property type="term" value="P:regulation of DNA-templated transcription"/>
    <property type="evidence" value="ECO:0007669"/>
    <property type="project" value="InterPro"/>
</dbReference>
<dbReference type="GO" id="GO:0043487">
    <property type="term" value="P:regulation of RNA stability"/>
    <property type="evidence" value="ECO:0000318"/>
    <property type="project" value="GO_Central"/>
</dbReference>
<dbReference type="GO" id="GO:0045974">
    <property type="term" value="P:regulation of translation, ncRNA-mediated"/>
    <property type="evidence" value="ECO:0000318"/>
    <property type="project" value="GO_Central"/>
</dbReference>
<dbReference type="CDD" id="cd01716">
    <property type="entry name" value="Hfq"/>
    <property type="match status" value="1"/>
</dbReference>
<dbReference type="FunFam" id="2.30.30.100:FF:000001">
    <property type="entry name" value="RNA-binding protein Hfq"/>
    <property type="match status" value="1"/>
</dbReference>
<dbReference type="Gene3D" id="2.30.30.100">
    <property type="match status" value="1"/>
</dbReference>
<dbReference type="HAMAP" id="MF_00436">
    <property type="entry name" value="Hfq"/>
    <property type="match status" value="1"/>
</dbReference>
<dbReference type="InterPro" id="IPR005001">
    <property type="entry name" value="Hfq"/>
</dbReference>
<dbReference type="InterPro" id="IPR010920">
    <property type="entry name" value="LSM_dom_sf"/>
</dbReference>
<dbReference type="InterPro" id="IPR047575">
    <property type="entry name" value="Sm"/>
</dbReference>
<dbReference type="NCBIfam" id="TIGR02383">
    <property type="entry name" value="Hfq"/>
    <property type="match status" value="1"/>
</dbReference>
<dbReference type="NCBIfam" id="NF001602">
    <property type="entry name" value="PRK00395.1"/>
    <property type="match status" value="1"/>
</dbReference>
<dbReference type="PANTHER" id="PTHR34772">
    <property type="entry name" value="RNA-BINDING PROTEIN HFQ"/>
    <property type="match status" value="1"/>
</dbReference>
<dbReference type="PANTHER" id="PTHR34772:SF1">
    <property type="entry name" value="RNA-BINDING PROTEIN HFQ"/>
    <property type="match status" value="1"/>
</dbReference>
<dbReference type="Pfam" id="PF17209">
    <property type="entry name" value="Hfq"/>
    <property type="match status" value="1"/>
</dbReference>
<dbReference type="SUPFAM" id="SSF50182">
    <property type="entry name" value="Sm-like ribonucleoproteins"/>
    <property type="match status" value="1"/>
</dbReference>
<dbReference type="PROSITE" id="PS52002">
    <property type="entry name" value="SM"/>
    <property type="match status" value="1"/>
</dbReference>
<keyword id="KW-1185">Reference proteome</keyword>
<keyword id="KW-0694">RNA-binding</keyword>
<keyword id="KW-0346">Stress response</keyword>
<organism>
    <name type="scientific">Shewanella oneidensis (strain ATCC 700550 / JCM 31522 / CIP 106686 / LMG 19005 / NCIMB 14063 / MR-1)</name>
    <dbReference type="NCBI Taxonomy" id="211586"/>
    <lineage>
        <taxon>Bacteria</taxon>
        <taxon>Pseudomonadati</taxon>
        <taxon>Pseudomonadota</taxon>
        <taxon>Gammaproteobacteria</taxon>
        <taxon>Alteromonadales</taxon>
        <taxon>Shewanellaceae</taxon>
        <taxon>Shewanella</taxon>
    </lineage>
</organism>
<evidence type="ECO:0000255" key="1">
    <source>
        <dbReference type="HAMAP-Rule" id="MF_00436"/>
    </source>
</evidence>
<evidence type="ECO:0000255" key="2">
    <source>
        <dbReference type="PROSITE-ProRule" id="PRU01346"/>
    </source>
</evidence>